<evidence type="ECO:0000255" key="1">
    <source>
        <dbReference type="HAMAP-Rule" id="MF_00409"/>
    </source>
</evidence>
<protein>
    <recommendedName>
        <fullName evidence="1">Tetraacyldisaccharide 4'-kinase</fullName>
        <ecNumber evidence="1">2.7.1.130</ecNumber>
    </recommendedName>
    <alternativeName>
        <fullName evidence="1">Lipid A 4'-kinase</fullName>
    </alternativeName>
</protein>
<comment type="function">
    <text evidence="1">Transfers the gamma-phosphate of ATP to the 4'-position of a tetraacyldisaccharide 1-phosphate intermediate (termed DS-1-P) to form tetraacyldisaccharide 1,4'-bis-phosphate (lipid IVA).</text>
</comment>
<comment type="catalytic activity">
    <reaction evidence="1">
        <text>a lipid A disaccharide + ATP = a lipid IVA + ADP + H(+)</text>
        <dbReference type="Rhea" id="RHEA:67840"/>
        <dbReference type="ChEBI" id="CHEBI:15378"/>
        <dbReference type="ChEBI" id="CHEBI:30616"/>
        <dbReference type="ChEBI" id="CHEBI:176343"/>
        <dbReference type="ChEBI" id="CHEBI:176425"/>
        <dbReference type="ChEBI" id="CHEBI:456216"/>
        <dbReference type="EC" id="2.7.1.130"/>
    </reaction>
</comment>
<comment type="pathway">
    <text evidence="1">Glycolipid biosynthesis; lipid IV(A) biosynthesis; lipid IV(A) from (3R)-3-hydroxytetradecanoyl-[acyl-carrier-protein] and UDP-N-acetyl-alpha-D-glucosamine: step 6/6.</text>
</comment>
<comment type="similarity">
    <text evidence="1">Belongs to the LpxK family.</text>
</comment>
<proteinExistence type="inferred from homology"/>
<feature type="chain" id="PRO_1000123707" description="Tetraacyldisaccharide 4'-kinase">
    <location>
        <begin position="1"/>
        <end position="328"/>
    </location>
</feature>
<feature type="binding site" evidence="1">
    <location>
        <begin position="55"/>
        <end position="62"/>
    </location>
    <ligand>
        <name>ATP</name>
        <dbReference type="ChEBI" id="CHEBI:30616"/>
    </ligand>
</feature>
<accession>B7M844</accession>
<reference key="1">
    <citation type="journal article" date="2009" name="PLoS Genet.">
        <title>Organised genome dynamics in the Escherichia coli species results in highly diverse adaptive paths.</title>
        <authorList>
            <person name="Touchon M."/>
            <person name="Hoede C."/>
            <person name="Tenaillon O."/>
            <person name="Barbe V."/>
            <person name="Baeriswyl S."/>
            <person name="Bidet P."/>
            <person name="Bingen E."/>
            <person name="Bonacorsi S."/>
            <person name="Bouchier C."/>
            <person name="Bouvet O."/>
            <person name="Calteau A."/>
            <person name="Chiapello H."/>
            <person name="Clermont O."/>
            <person name="Cruveiller S."/>
            <person name="Danchin A."/>
            <person name="Diard M."/>
            <person name="Dossat C."/>
            <person name="Karoui M.E."/>
            <person name="Frapy E."/>
            <person name="Garry L."/>
            <person name="Ghigo J.M."/>
            <person name="Gilles A.M."/>
            <person name="Johnson J."/>
            <person name="Le Bouguenec C."/>
            <person name="Lescat M."/>
            <person name="Mangenot S."/>
            <person name="Martinez-Jehanne V."/>
            <person name="Matic I."/>
            <person name="Nassif X."/>
            <person name="Oztas S."/>
            <person name="Petit M.A."/>
            <person name="Pichon C."/>
            <person name="Rouy Z."/>
            <person name="Ruf C.S."/>
            <person name="Schneider D."/>
            <person name="Tourret J."/>
            <person name="Vacherie B."/>
            <person name="Vallenet D."/>
            <person name="Medigue C."/>
            <person name="Rocha E.P.C."/>
            <person name="Denamur E."/>
        </authorList>
    </citation>
    <scope>NUCLEOTIDE SEQUENCE [LARGE SCALE GENOMIC DNA]</scope>
    <source>
        <strain>IAI1</strain>
    </source>
</reference>
<name>LPXK_ECO8A</name>
<organism>
    <name type="scientific">Escherichia coli O8 (strain IAI1)</name>
    <dbReference type="NCBI Taxonomy" id="585034"/>
    <lineage>
        <taxon>Bacteria</taxon>
        <taxon>Pseudomonadati</taxon>
        <taxon>Pseudomonadota</taxon>
        <taxon>Gammaproteobacteria</taxon>
        <taxon>Enterobacterales</taxon>
        <taxon>Enterobacteriaceae</taxon>
        <taxon>Escherichia</taxon>
    </lineage>
</organism>
<sequence>MIEKIWSGESPLWRLLLPLSWLYGLVSGAIRLCYKLKLKRAWRAPVPVVVVGNLTAGGNGKTPVVVWLVEQLQQRGIRVGVVSRGYGGKAESYPLLLSADTTTAQAGDEPVLIYQRTDAPVAVSPVRSDAVKAILAQHPDVQIIVTDDGLQHYRLARDVEIVVIDGVRRFGNGWWLPAGPMRERAGRLKSVDAVIVNGGVPRSGEIPMHLLPGQAVNLRTGTRCDVAQLEHVVAMAGIGHPPRFFATLKMCGVQPEKCVPLADHQSLNHADVSALVSAGQTLVMTEKDAVKCRAFAEENWWYLPVDAQLSGDEPAKLLTQLTSLASGN</sequence>
<keyword id="KW-0067">ATP-binding</keyword>
<keyword id="KW-0418">Kinase</keyword>
<keyword id="KW-0441">Lipid A biosynthesis</keyword>
<keyword id="KW-0444">Lipid biosynthesis</keyword>
<keyword id="KW-0443">Lipid metabolism</keyword>
<keyword id="KW-0547">Nucleotide-binding</keyword>
<keyword id="KW-0808">Transferase</keyword>
<gene>
    <name evidence="1" type="primary">lpxK</name>
    <name type="ordered locus">ECIAI1_0956</name>
</gene>
<dbReference type="EC" id="2.7.1.130" evidence="1"/>
<dbReference type="EMBL" id="CU928160">
    <property type="protein sequence ID" value="CAQ97820.1"/>
    <property type="molecule type" value="Genomic_DNA"/>
</dbReference>
<dbReference type="RefSeq" id="WP_000570540.1">
    <property type="nucleotide sequence ID" value="NC_011741.1"/>
</dbReference>
<dbReference type="SMR" id="B7M844"/>
<dbReference type="GeneID" id="93776500"/>
<dbReference type="KEGG" id="ecr:ECIAI1_0956"/>
<dbReference type="HOGENOM" id="CLU_038816_2_0_6"/>
<dbReference type="UniPathway" id="UPA00359">
    <property type="reaction ID" value="UER00482"/>
</dbReference>
<dbReference type="GO" id="GO:0005886">
    <property type="term" value="C:plasma membrane"/>
    <property type="evidence" value="ECO:0007669"/>
    <property type="project" value="TreeGrafter"/>
</dbReference>
<dbReference type="GO" id="GO:0005524">
    <property type="term" value="F:ATP binding"/>
    <property type="evidence" value="ECO:0007669"/>
    <property type="project" value="UniProtKB-UniRule"/>
</dbReference>
<dbReference type="GO" id="GO:0009029">
    <property type="term" value="F:tetraacyldisaccharide 4'-kinase activity"/>
    <property type="evidence" value="ECO:0007669"/>
    <property type="project" value="UniProtKB-UniRule"/>
</dbReference>
<dbReference type="GO" id="GO:0009245">
    <property type="term" value="P:lipid A biosynthetic process"/>
    <property type="evidence" value="ECO:0007669"/>
    <property type="project" value="UniProtKB-UniRule"/>
</dbReference>
<dbReference type="GO" id="GO:0009244">
    <property type="term" value="P:lipopolysaccharide core region biosynthetic process"/>
    <property type="evidence" value="ECO:0007669"/>
    <property type="project" value="TreeGrafter"/>
</dbReference>
<dbReference type="HAMAP" id="MF_00409">
    <property type="entry name" value="LpxK"/>
    <property type="match status" value="1"/>
</dbReference>
<dbReference type="InterPro" id="IPR003758">
    <property type="entry name" value="LpxK"/>
</dbReference>
<dbReference type="InterPro" id="IPR027417">
    <property type="entry name" value="P-loop_NTPase"/>
</dbReference>
<dbReference type="NCBIfam" id="TIGR00682">
    <property type="entry name" value="lpxK"/>
    <property type="match status" value="1"/>
</dbReference>
<dbReference type="PANTHER" id="PTHR42724">
    <property type="entry name" value="TETRAACYLDISACCHARIDE 4'-KINASE"/>
    <property type="match status" value="1"/>
</dbReference>
<dbReference type="PANTHER" id="PTHR42724:SF1">
    <property type="entry name" value="TETRAACYLDISACCHARIDE 4'-KINASE, MITOCHONDRIAL-RELATED"/>
    <property type="match status" value="1"/>
</dbReference>
<dbReference type="Pfam" id="PF02606">
    <property type="entry name" value="LpxK"/>
    <property type="match status" value="1"/>
</dbReference>
<dbReference type="SUPFAM" id="SSF52540">
    <property type="entry name" value="P-loop containing nucleoside triphosphate hydrolases"/>
    <property type="match status" value="1"/>
</dbReference>